<name>SEPT8_HUMAN</name>
<evidence type="ECO:0000250" key="1"/>
<evidence type="ECO:0000250" key="2">
    <source>
        <dbReference type="UniProtKB" id="B0BNF1"/>
    </source>
</evidence>
<evidence type="ECO:0000250" key="3">
    <source>
        <dbReference type="UniProtKB" id="Q8CHH9"/>
    </source>
</evidence>
<evidence type="ECO:0000255" key="4"/>
<evidence type="ECO:0000255" key="5">
    <source>
        <dbReference type="PROSITE-ProRule" id="PRU01056"/>
    </source>
</evidence>
<evidence type="ECO:0000256" key="6">
    <source>
        <dbReference type="SAM" id="MobiDB-lite"/>
    </source>
</evidence>
<evidence type="ECO:0000269" key="7">
    <source>
    </source>
</evidence>
<evidence type="ECO:0000269" key="8">
    <source>
    </source>
</evidence>
<evidence type="ECO:0000269" key="9">
    <source>
    </source>
</evidence>
<evidence type="ECO:0000269" key="10">
    <source>
    </source>
</evidence>
<evidence type="ECO:0000269" key="11">
    <source>
    </source>
</evidence>
<evidence type="ECO:0000269" key="12">
    <source>
    </source>
</evidence>
<evidence type="ECO:0000303" key="13">
    <source>
    </source>
</evidence>
<evidence type="ECO:0000303" key="14">
    <source>
    </source>
</evidence>
<evidence type="ECO:0000303" key="15">
    <source>
    </source>
</evidence>
<evidence type="ECO:0000303" key="16">
    <source>
    </source>
</evidence>
<evidence type="ECO:0000303" key="17">
    <source>
    </source>
</evidence>
<evidence type="ECO:0000303" key="18">
    <source>
    </source>
</evidence>
<evidence type="ECO:0000305" key="19"/>
<evidence type="ECO:0000312" key="20">
    <source>
        <dbReference type="HGNC" id="HGNC:16511"/>
    </source>
</evidence>
<evidence type="ECO:0007744" key="21">
    <source>
    </source>
</evidence>
<evidence type="ECO:0007744" key="22">
    <source>
    </source>
</evidence>
<evidence type="ECO:0007829" key="23">
    <source>
        <dbReference type="PDB" id="6UPR"/>
    </source>
</evidence>
<evidence type="ECO:0007829" key="24">
    <source>
        <dbReference type="PDB" id="6WSM"/>
    </source>
</evidence>
<comment type="function">
    <text evidence="1 2 10">Filament-forming cytoskeletal GTPase (By similarity). May play a role in platelet secretion (PubMed:15116257). Seems to participate in the process of SNARE complex formation in synaptic vesicles (By similarity).</text>
</comment>
<comment type="function">
    <molecule>Isoform 4</molecule>
    <text evidence="12">Stabilizes BACE1 protein levels and promotes the sorting and accumulation of BACE1 to the recycling or endosomal compartments, modulating the beta-amyloidogenic processing of APP.</text>
</comment>
<comment type="subunit">
    <text evidence="2 3 8 9 10">Septins polymerize into heterooligomeric protein complexes that form filaments, and can associate with cellular membranes, actin filaments and microtubules. GTPase activity is required for filament formation (By similarity). Interacts with CDK14 (PubMed:12098780). Interacts with SEPTIN5 (PubMed:12909369). Interacts with SEPTIN7 (By similarity). Interacts with SEPTIN4 (PubMed:15116257). Interacts with VAMP2; the interaction inhibits interaction of VAMP2 with SYP (By similarity). Interacts with STX1A (By similarity).</text>
</comment>
<comment type="interaction">
    <interactant intactId="EBI-958021">
        <id>Q92599</id>
    </interactant>
    <interactant intactId="EBI-373345">
        <id>Q99719</id>
        <label>SEPTIN5</label>
    </interactant>
    <organismsDiffer>false</organismsDiffer>
    <experiments>7</experiments>
</comment>
<comment type="interaction">
    <interactant intactId="EBI-958021">
        <id>Q92599</id>
    </interactant>
    <interactant intactId="EBI-2009373">
        <id>Q16181</id>
        <label>SEPTIN7</label>
    </interactant>
    <organismsDiffer>false</organismsDiffer>
    <experiments>5</experiments>
</comment>
<comment type="interaction">
    <interactant intactId="EBI-25891137">
        <id>Q92599-3</id>
    </interactant>
    <interactant intactId="EBI-77613">
        <id>P05067</id>
        <label>APP</label>
    </interactant>
    <organismsDiffer>false</organismsDiffer>
    <experiments>3</experiments>
</comment>
<comment type="interaction">
    <interactant intactId="EBI-25891137">
        <id>Q92599-3</id>
    </interactant>
    <interactant intactId="EBI-458391">
        <id>P04271</id>
        <label>S100B</label>
    </interactant>
    <organismsDiffer>false</organismsDiffer>
    <experiments>3</experiments>
</comment>
<comment type="subcellular location">
    <subcellularLocation>
        <location evidence="2">Cytoplasm</location>
    </subcellularLocation>
    <subcellularLocation>
        <location evidence="1">Cytoplasm</location>
        <location evidence="1">Cytoskeleton</location>
    </subcellularLocation>
    <subcellularLocation>
        <location evidence="2">Synapse</location>
    </subcellularLocation>
    <subcellularLocation>
        <location evidence="2">Cell projection</location>
        <location evidence="2">Axon</location>
    </subcellularLocation>
    <subcellularLocation>
        <location evidence="2">Cytoplasmic vesicle</location>
        <location evidence="2">Secretory vesicle</location>
        <location evidence="2">Synaptic vesicle membrane</location>
    </subcellularLocation>
    <subcellularLocation>
        <location evidence="2">Presynapse</location>
    </subcellularLocation>
    <text evidence="2 10">Expressed in axons of immature neurons, localizes to synapses in mature neurons (By similarity). In platelets, found in areas surrounding alpha-granules (PubMed:15116257).</text>
</comment>
<comment type="alternative products">
    <event type="alternative splicing"/>
    <isoform>
        <id>Q92599-1</id>
        <name>1</name>
        <name evidence="14">KIAA0202b</name>
        <name evidence="14">SEPT8_v2</name>
        <name evidence="17">SEPT8 TV1</name>
        <sequence type="displayed"/>
    </isoform>
    <isoform>
        <id>Q92599-2</id>
        <name>2</name>
        <name evidence="14">KIAA0202a</name>
        <name evidence="14">SEPT8_v1</name>
        <name evidence="14">KIAA0202c</name>
        <name evidence="14">SEPT8_v1*</name>
        <name evidence="17">SEPT8 TV2</name>
        <sequence type="described" ref="VSP_009644"/>
    </isoform>
    <isoform>
        <id>Q92599-3</id>
        <name>3</name>
        <name evidence="14">KIAA0202d</name>
        <name evidence="14">SEPT8_v3</name>
        <name evidence="17">SEPT8 TV4</name>
        <sequence type="described" ref="VSP_009643 VSP_009644"/>
    </isoform>
    <isoform>
        <id>Q92599-4</id>
        <name>4</name>
        <name evidence="17">SEPT8 TV3</name>
        <sequence type="described" ref="VSP_054085 VSP_054086"/>
    </isoform>
</comment>
<comment type="tissue specificity">
    <text evidence="7 9 10 11 12">Widely expressed, including in brain, heart and platelets; most abundant in aorta. Isoform 2 is expressed at low levels in specific brain areas, such as occipital pole, frontal lobe, temporal lobe and putamen. Isoform 1 and 3 are highly expressed in specific brain areas, such as occipital pole, frontal lobe, temporal lobe and putamen. Isoform 2 is highly expressed in prostate, testis and ovary. Isoform 1 and isoform 3 are expressed at low levels in prostate, testis and ovary.</text>
</comment>
<comment type="miscellaneous">
    <molecule>Isoform 2</molecule>
    <text evidence="19">KIAA0202a differs from KIAA0202c at the level of the 3'-UTR.</text>
</comment>
<comment type="similarity">
    <text evidence="5">Belongs to the TRAFAC class TrmE-Era-EngA-EngB-Septin-like GTPase superfamily. Septin GTPase family.</text>
</comment>
<comment type="sequence caution" evidence="19">
    <conflict type="erroneous initiation">
        <sequence resource="EMBL-CDS" id="AAG09407"/>
    </conflict>
    <text>Extended N-terminus.</text>
</comment>
<comment type="sequence caution" evidence="19">
    <conflict type="erroneous initiation">
        <sequence resource="EMBL-CDS" id="AAH01329"/>
    </conflict>
    <text>Truncated N-terminus.</text>
</comment>
<comment type="sequence caution" evidence="19">
    <conflict type="erroneous initiation">
        <sequence resource="EMBL-CDS" id="AAO13878"/>
    </conflict>
    <text>Extended N-terminus.</text>
</comment>
<comment type="sequence caution" evidence="19">
    <conflict type="erroneous initiation">
        <sequence resource="EMBL-CDS" id="AAO13879"/>
    </conflict>
    <text>Extended N-terminus.</text>
</comment>
<comment type="sequence caution" evidence="19">
    <conflict type="erroneous initiation">
        <sequence resource="EMBL-CDS" id="AAO13880"/>
    </conflict>
    <text>Extended N-terminus.</text>
</comment>
<comment type="sequence caution" evidence="19">
    <conflict type="erroneous initiation">
        <sequence resource="EMBL-CDS" id="BAA13193"/>
    </conflict>
    <text>Extended N-terminus.</text>
</comment>
<feature type="initiator methionine" description="Removed" evidence="21">
    <location>
        <position position="1"/>
    </location>
</feature>
<feature type="chain" id="PRO_0000173533" description="Septin-8">
    <location>
        <begin position="2"/>
        <end position="483"/>
    </location>
</feature>
<feature type="domain" description="Septin-type G" evidence="5">
    <location>
        <begin position="41"/>
        <end position="307"/>
    </location>
</feature>
<feature type="region of interest" description="Disordered" evidence="6">
    <location>
        <begin position="1"/>
        <end position="22"/>
    </location>
</feature>
<feature type="region of interest" description="G1 motif" evidence="5">
    <location>
        <begin position="51"/>
        <end position="58"/>
    </location>
</feature>
<feature type="region of interest" description="G3 motif" evidence="5">
    <location>
        <begin position="103"/>
        <end position="106"/>
    </location>
</feature>
<feature type="region of interest" description="G4 motif" evidence="5">
    <location>
        <begin position="186"/>
        <end position="189"/>
    </location>
</feature>
<feature type="region of interest" description="Disordered" evidence="6">
    <location>
        <begin position="411"/>
        <end position="443"/>
    </location>
</feature>
<feature type="coiled-coil region" evidence="4">
    <location>
        <begin position="320"/>
        <end position="413"/>
    </location>
</feature>
<feature type="compositionally biased region" description="Basic and acidic residues" evidence="6">
    <location>
        <begin position="1"/>
        <end position="16"/>
    </location>
</feature>
<feature type="compositionally biased region" description="Polar residues" evidence="6">
    <location>
        <begin position="411"/>
        <end position="420"/>
    </location>
</feature>
<feature type="compositionally biased region" description="Basic and acidic residues" evidence="6">
    <location>
        <begin position="421"/>
        <end position="433"/>
    </location>
</feature>
<feature type="binding site" evidence="1">
    <location>
        <begin position="51"/>
        <end position="58"/>
    </location>
    <ligand>
        <name>GTP</name>
        <dbReference type="ChEBI" id="CHEBI:37565"/>
    </ligand>
</feature>
<feature type="binding site" evidence="1">
    <location>
        <position position="106"/>
    </location>
    <ligand>
        <name>GTP</name>
        <dbReference type="ChEBI" id="CHEBI:37565"/>
    </ligand>
</feature>
<feature type="binding site" evidence="1">
    <location>
        <begin position="187"/>
        <end position="195"/>
    </location>
    <ligand>
        <name>GTP</name>
        <dbReference type="ChEBI" id="CHEBI:37565"/>
    </ligand>
</feature>
<feature type="binding site" evidence="1">
    <location>
        <position position="241"/>
    </location>
    <ligand>
        <name>GTP</name>
        <dbReference type="ChEBI" id="CHEBI:37565"/>
    </ligand>
</feature>
<feature type="binding site" evidence="1">
    <location>
        <position position="256"/>
    </location>
    <ligand>
        <name>GTP</name>
        <dbReference type="ChEBI" id="CHEBI:37565"/>
    </ligand>
</feature>
<feature type="modified residue" description="N-acetylalanine" evidence="21">
    <location>
        <position position="2"/>
    </location>
</feature>
<feature type="modified residue" description="Phosphoserine" evidence="22">
    <location>
        <position position="10"/>
    </location>
</feature>
<feature type="splice variant" id="VSP_009643" description="In isoform 3." evidence="15">
    <location>
        <begin position="1"/>
        <end position="60"/>
    </location>
</feature>
<feature type="splice variant" id="VSP_054085" description="In isoform 4." evidence="16">
    <original>NRSDIGAHQPGMSL</original>
    <variation>KASGWSSIYSVTIP</variation>
    <location>
        <begin position="429"/>
        <end position="442"/>
    </location>
</feature>
<feature type="splice variant" id="VSP_009644" description="In isoform 2 and isoform 3." evidence="13 15 18">
    <location>
        <begin position="430"/>
        <end position="483"/>
    </location>
</feature>
<feature type="splice variant" id="VSP_054086" description="In isoform 4." evidence="16">
    <location>
        <begin position="443"/>
        <end position="483"/>
    </location>
</feature>
<feature type="sequence conflict" description="In Ref. 5; AK057797." evidence="19" ref="5">
    <location>
        <begin position="116"/>
        <end position="117"/>
    </location>
</feature>
<feature type="sequence conflict" description="In Ref. 5; AK057797." evidence="19" ref="5">
    <original>E</original>
    <variation>V</variation>
    <location>
        <position position="365"/>
    </location>
</feature>
<feature type="strand" evidence="23">
    <location>
        <begin position="43"/>
        <end position="50"/>
    </location>
</feature>
<feature type="helix" evidence="23">
    <location>
        <begin position="57"/>
        <end position="64"/>
    </location>
</feature>
<feature type="strand" evidence="23">
    <location>
        <begin position="82"/>
        <end position="94"/>
    </location>
</feature>
<feature type="strand" evidence="23">
    <location>
        <begin position="96"/>
        <end position="105"/>
    </location>
</feature>
<feature type="turn" evidence="23">
    <location>
        <begin position="106"/>
        <end position="108"/>
    </location>
</feature>
<feature type="helix" evidence="23">
    <location>
        <begin position="118"/>
        <end position="135"/>
    </location>
</feature>
<feature type="turn" evidence="23">
    <location>
        <begin position="142"/>
        <end position="144"/>
    </location>
</feature>
<feature type="strand" evidence="23">
    <location>
        <begin position="152"/>
        <end position="157"/>
    </location>
</feature>
<feature type="strand" evidence="23">
    <location>
        <begin position="161"/>
        <end position="163"/>
    </location>
</feature>
<feature type="helix" evidence="23">
    <location>
        <begin position="166"/>
        <end position="175"/>
    </location>
</feature>
<feature type="turn" evidence="23">
    <location>
        <begin position="176"/>
        <end position="178"/>
    </location>
</feature>
<feature type="strand" evidence="23">
    <location>
        <begin position="181"/>
        <end position="185"/>
    </location>
</feature>
<feature type="helix" evidence="23">
    <location>
        <begin position="188"/>
        <end position="190"/>
    </location>
</feature>
<feature type="helix" evidence="23">
    <location>
        <begin position="193"/>
        <end position="210"/>
    </location>
</feature>
<feature type="helix" evidence="23">
    <location>
        <begin position="222"/>
        <end position="224"/>
    </location>
</feature>
<feature type="helix" evidence="23">
    <location>
        <begin position="225"/>
        <end position="233"/>
    </location>
</feature>
<feature type="strand" evidence="23">
    <location>
        <begin position="236"/>
        <end position="238"/>
    </location>
</feature>
<feature type="strand" evidence="23">
    <location>
        <begin position="245"/>
        <end position="248"/>
    </location>
</feature>
<feature type="strand" evidence="23">
    <location>
        <begin position="251"/>
        <end position="258"/>
    </location>
</feature>
<feature type="strand" evidence="23">
    <location>
        <begin position="261"/>
        <end position="264"/>
    </location>
</feature>
<feature type="turn" evidence="23">
    <location>
        <begin position="268"/>
        <end position="270"/>
    </location>
</feature>
<feature type="helix" evidence="23">
    <location>
        <begin position="273"/>
        <end position="277"/>
    </location>
</feature>
<feature type="helix" evidence="23">
    <location>
        <begin position="278"/>
        <end position="280"/>
    </location>
</feature>
<feature type="helix" evidence="23">
    <location>
        <begin position="282"/>
        <end position="294"/>
    </location>
</feature>
<feature type="helix" evidence="23">
    <location>
        <begin position="296"/>
        <end position="308"/>
    </location>
</feature>
<feature type="helix" evidence="24">
    <location>
        <begin position="336"/>
        <end position="406"/>
    </location>
</feature>
<protein>
    <recommendedName>
        <fullName evidence="19">Septin-8</fullName>
    </recommendedName>
</protein>
<keyword id="KW-0002">3D-structure</keyword>
<keyword id="KW-0007">Acetylation</keyword>
<keyword id="KW-0025">Alternative splicing</keyword>
<keyword id="KW-0966">Cell projection</keyword>
<keyword id="KW-0175">Coiled coil</keyword>
<keyword id="KW-0963">Cytoplasm</keyword>
<keyword id="KW-0968">Cytoplasmic vesicle</keyword>
<keyword id="KW-0206">Cytoskeleton</keyword>
<keyword id="KW-0342">GTP-binding</keyword>
<keyword id="KW-0472">Membrane</keyword>
<keyword id="KW-0547">Nucleotide-binding</keyword>
<keyword id="KW-0597">Phosphoprotein</keyword>
<keyword id="KW-1267">Proteomics identification</keyword>
<keyword id="KW-1185">Reference proteome</keyword>
<keyword id="KW-0770">Synapse</keyword>
<dbReference type="EMBL" id="D86957">
    <property type="protein sequence ID" value="BAA13193.1"/>
    <property type="status" value="ALT_INIT"/>
    <property type="molecule type" value="mRNA"/>
</dbReference>
<dbReference type="EMBL" id="AF179995">
    <property type="protein sequence ID" value="AAG09407.1"/>
    <property type="status" value="ALT_INIT"/>
    <property type="molecule type" value="mRNA"/>
</dbReference>
<dbReference type="EMBL" id="AF440761">
    <property type="protein sequence ID" value="AAO13878.1"/>
    <property type="status" value="ALT_INIT"/>
    <property type="molecule type" value="mRNA"/>
</dbReference>
<dbReference type="EMBL" id="AF440762">
    <property type="protein sequence ID" value="AAO13879.1"/>
    <property type="status" value="ALT_INIT"/>
    <property type="molecule type" value="mRNA"/>
</dbReference>
<dbReference type="EMBL" id="AF440763">
    <property type="protein sequence ID" value="AAO13880.1"/>
    <property type="status" value="ALT_INIT"/>
    <property type="molecule type" value="mRNA"/>
</dbReference>
<dbReference type="EMBL" id="AK057797">
    <property type="status" value="NOT_ANNOTATED_CDS"/>
    <property type="molecule type" value="mRNA"/>
</dbReference>
<dbReference type="EMBL" id="AC004775">
    <property type="status" value="NOT_ANNOTATED_CDS"/>
    <property type="molecule type" value="Genomic_DNA"/>
</dbReference>
<dbReference type="EMBL" id="CH471062">
    <property type="protein sequence ID" value="EAW62315.1"/>
    <property type="molecule type" value="Genomic_DNA"/>
</dbReference>
<dbReference type="EMBL" id="CH471062">
    <property type="protein sequence ID" value="EAW62317.1"/>
    <property type="molecule type" value="Genomic_DNA"/>
</dbReference>
<dbReference type="EMBL" id="BC001329">
    <property type="protein sequence ID" value="AAH01329.1"/>
    <property type="status" value="ALT_INIT"/>
    <property type="molecule type" value="mRNA"/>
</dbReference>
<dbReference type="CCDS" id="CCDS43358.1">
    <molecule id="Q92599-1"/>
</dbReference>
<dbReference type="CCDS" id="CCDS43359.1">
    <molecule id="Q92599-4"/>
</dbReference>
<dbReference type="CCDS" id="CCDS43360.1">
    <molecule id="Q92599-2"/>
</dbReference>
<dbReference type="CCDS" id="CCDS47262.1">
    <molecule id="Q92599-3"/>
</dbReference>
<dbReference type="RefSeq" id="NP_001092281.1">
    <molecule id="Q92599-1"/>
    <property type="nucleotide sequence ID" value="NM_001098811.2"/>
</dbReference>
<dbReference type="RefSeq" id="NP_001092282.1">
    <molecule id="Q92599-4"/>
    <property type="nucleotide sequence ID" value="NM_001098812.2"/>
</dbReference>
<dbReference type="RefSeq" id="NP_001092283.1">
    <molecule id="Q92599-3"/>
    <property type="nucleotide sequence ID" value="NM_001098813.2"/>
</dbReference>
<dbReference type="RefSeq" id="NP_001287727.1">
    <property type="nucleotide sequence ID" value="NM_001300798.1"/>
</dbReference>
<dbReference type="RefSeq" id="NP_001287728.1">
    <property type="nucleotide sequence ID" value="NM_001300799.1"/>
</dbReference>
<dbReference type="RefSeq" id="NP_055961.1">
    <molecule id="Q92599-2"/>
    <property type="nucleotide sequence ID" value="NM_015146.2"/>
</dbReference>
<dbReference type="PDB" id="6UPR">
    <property type="method" value="X-ray"/>
    <property type="resolution" value="2.30 A"/>
    <property type="chains" value="B=36-311"/>
</dbReference>
<dbReference type="PDB" id="6WSM">
    <property type="method" value="X-ray"/>
    <property type="resolution" value="2.45 A"/>
    <property type="chains" value="A=309-429"/>
</dbReference>
<dbReference type="PDBsum" id="6UPR"/>
<dbReference type="PDBsum" id="6WSM"/>
<dbReference type="SASBDB" id="Q92599"/>
<dbReference type="SMR" id="Q92599"/>
<dbReference type="BioGRID" id="116788">
    <property type="interactions" value="95"/>
</dbReference>
<dbReference type="FunCoup" id="Q92599">
    <property type="interactions" value="517"/>
</dbReference>
<dbReference type="IntAct" id="Q92599">
    <property type="interactions" value="52"/>
</dbReference>
<dbReference type="MINT" id="Q92599"/>
<dbReference type="STRING" id="9606.ENSP00000367991"/>
<dbReference type="GlyGen" id="Q92599">
    <property type="glycosylation" value="1 site, 1 O-linked glycan (1 site)"/>
</dbReference>
<dbReference type="iPTMnet" id="Q92599"/>
<dbReference type="PhosphoSitePlus" id="Q92599"/>
<dbReference type="SwissPalm" id="Q92599"/>
<dbReference type="BioMuta" id="SEPT8"/>
<dbReference type="DMDM" id="45645200"/>
<dbReference type="jPOST" id="Q92599"/>
<dbReference type="MassIVE" id="Q92599"/>
<dbReference type="PaxDb" id="9606-ENSP00000367991"/>
<dbReference type="PeptideAtlas" id="Q92599"/>
<dbReference type="ProteomicsDB" id="28101"/>
<dbReference type="ProteomicsDB" id="75347">
    <molecule id="Q92599-1"/>
</dbReference>
<dbReference type="ProteomicsDB" id="75348">
    <molecule id="Q92599-2"/>
</dbReference>
<dbReference type="ProteomicsDB" id="75349">
    <molecule id="Q92599-3"/>
</dbReference>
<dbReference type="Pumba" id="Q92599"/>
<dbReference type="Antibodypedia" id="26134">
    <property type="antibodies" value="236 antibodies from 31 providers"/>
</dbReference>
<dbReference type="DNASU" id="23176"/>
<dbReference type="Ensembl" id="ENST00000296873.11">
    <molecule id="Q92599-2"/>
    <property type="protein sequence ID" value="ENSP00000296873.7"/>
    <property type="gene ID" value="ENSG00000164402.14"/>
</dbReference>
<dbReference type="Ensembl" id="ENST00000378699.6">
    <molecule id="Q92599-3"/>
    <property type="protein sequence ID" value="ENSP00000367971.2"/>
    <property type="gene ID" value="ENSG00000164402.14"/>
</dbReference>
<dbReference type="Ensembl" id="ENST00000378719.7">
    <molecule id="Q92599-1"/>
    <property type="protein sequence ID" value="ENSP00000367991.2"/>
    <property type="gene ID" value="ENSG00000164402.14"/>
</dbReference>
<dbReference type="Ensembl" id="ENST00000448933.5">
    <molecule id="Q92599-3"/>
    <property type="protein sequence ID" value="ENSP00000399840.1"/>
    <property type="gene ID" value="ENSG00000164402.14"/>
</dbReference>
<dbReference type="Ensembl" id="ENST00000458488.2">
    <molecule id="Q92599-4"/>
    <property type="protein sequence ID" value="ENSP00000394766.2"/>
    <property type="gene ID" value="ENSG00000164402.14"/>
</dbReference>
<dbReference type="GeneID" id="23176"/>
<dbReference type="KEGG" id="hsa:23176"/>
<dbReference type="MANE-Select" id="ENST00000378719.7">
    <property type="protein sequence ID" value="ENSP00000367991.2"/>
    <property type="RefSeq nucleotide sequence ID" value="NM_001098811.2"/>
    <property type="RefSeq protein sequence ID" value="NP_001092281.1"/>
</dbReference>
<dbReference type="UCSC" id="uc003kxr.2">
    <molecule id="Q92599-1"/>
    <property type="organism name" value="human"/>
</dbReference>
<dbReference type="AGR" id="HGNC:16511"/>
<dbReference type="CTD" id="23176"/>
<dbReference type="DisGeNET" id="23176"/>
<dbReference type="GeneCards" id="SEPTIN8"/>
<dbReference type="HGNC" id="HGNC:16511">
    <property type="gene designation" value="SEPTIN8"/>
</dbReference>
<dbReference type="HPA" id="ENSG00000164402">
    <property type="expression patterns" value="Tissue enriched (brain)"/>
</dbReference>
<dbReference type="MIM" id="608418">
    <property type="type" value="gene"/>
</dbReference>
<dbReference type="neXtProt" id="NX_Q92599"/>
<dbReference type="OpenTargets" id="ENSG00000164402"/>
<dbReference type="PharmGKB" id="PA134879270"/>
<dbReference type="VEuPathDB" id="HostDB:ENSG00000164402"/>
<dbReference type="eggNOG" id="KOG3859">
    <property type="taxonomic scope" value="Eukaryota"/>
</dbReference>
<dbReference type="GeneTree" id="ENSGT00940000156068"/>
<dbReference type="HOGENOM" id="CLU_017718_6_4_1"/>
<dbReference type="InParanoid" id="Q92599"/>
<dbReference type="OMA" id="NTWWQAI"/>
<dbReference type="OrthoDB" id="416553at2759"/>
<dbReference type="PAN-GO" id="Q92599">
    <property type="GO annotations" value="8 GO annotations based on evolutionary models"/>
</dbReference>
<dbReference type="PhylomeDB" id="Q92599"/>
<dbReference type="TreeFam" id="TF101080"/>
<dbReference type="PathwayCommons" id="Q92599"/>
<dbReference type="SignaLink" id="Q92599"/>
<dbReference type="BioGRID-ORCS" id="23176">
    <property type="hits" value="10 hits in 1084 CRISPR screens"/>
</dbReference>
<dbReference type="CD-CODE" id="FB4E32DD">
    <property type="entry name" value="Presynaptic clusters and postsynaptic densities"/>
</dbReference>
<dbReference type="ChiTaRS" id="SEPT8">
    <property type="organism name" value="human"/>
</dbReference>
<dbReference type="GeneWiki" id="SEPT8"/>
<dbReference type="GenomeRNAi" id="23176"/>
<dbReference type="Pharos" id="Q92599">
    <property type="development level" value="Tbio"/>
</dbReference>
<dbReference type="PRO" id="PR:Q92599"/>
<dbReference type="Proteomes" id="UP000005640">
    <property type="component" value="Chromosome 5"/>
</dbReference>
<dbReference type="RNAct" id="Q92599">
    <property type="molecule type" value="protein"/>
</dbReference>
<dbReference type="Bgee" id="ENSG00000164402">
    <property type="expression patterns" value="Expressed in middle temporal gyrus and 196 other cell types or tissues"/>
</dbReference>
<dbReference type="ExpressionAtlas" id="Q92599">
    <property type="expression patterns" value="baseline and differential"/>
</dbReference>
<dbReference type="GO" id="GO:0030424">
    <property type="term" value="C:axon"/>
    <property type="evidence" value="ECO:0007669"/>
    <property type="project" value="UniProtKB-SubCell"/>
</dbReference>
<dbReference type="GO" id="GO:0032153">
    <property type="term" value="C:cell division site"/>
    <property type="evidence" value="ECO:0000318"/>
    <property type="project" value="GO_Central"/>
</dbReference>
<dbReference type="GO" id="GO:0015630">
    <property type="term" value="C:microtubule cytoskeleton"/>
    <property type="evidence" value="ECO:0000318"/>
    <property type="project" value="GO_Central"/>
</dbReference>
<dbReference type="GO" id="GO:0098793">
    <property type="term" value="C:presynapse"/>
    <property type="evidence" value="ECO:0000250"/>
    <property type="project" value="UniProtKB"/>
</dbReference>
<dbReference type="GO" id="GO:0031105">
    <property type="term" value="C:septin complex"/>
    <property type="evidence" value="ECO:0000318"/>
    <property type="project" value="GO_Central"/>
</dbReference>
<dbReference type="GO" id="GO:0005940">
    <property type="term" value="C:septin ring"/>
    <property type="evidence" value="ECO:0000318"/>
    <property type="project" value="GO_Central"/>
</dbReference>
<dbReference type="GO" id="GO:0030672">
    <property type="term" value="C:synaptic vesicle membrane"/>
    <property type="evidence" value="ECO:0007669"/>
    <property type="project" value="UniProtKB-SubCell"/>
</dbReference>
<dbReference type="GO" id="GO:0005525">
    <property type="term" value="F:GTP binding"/>
    <property type="evidence" value="ECO:0007669"/>
    <property type="project" value="UniProtKB-KW"/>
</dbReference>
<dbReference type="GO" id="GO:0003924">
    <property type="term" value="F:GTPase activity"/>
    <property type="evidence" value="ECO:0000318"/>
    <property type="project" value="GO_Central"/>
</dbReference>
<dbReference type="GO" id="GO:0060090">
    <property type="term" value="F:molecular adaptor activity"/>
    <property type="evidence" value="ECO:0000318"/>
    <property type="project" value="GO_Central"/>
</dbReference>
<dbReference type="GO" id="GO:0061640">
    <property type="term" value="P:cytoskeleton-dependent cytokinesis"/>
    <property type="evidence" value="ECO:0000318"/>
    <property type="project" value="GO_Central"/>
</dbReference>
<dbReference type="GO" id="GO:0008104">
    <property type="term" value="P:protein localization"/>
    <property type="evidence" value="ECO:0000318"/>
    <property type="project" value="GO_Central"/>
</dbReference>
<dbReference type="GO" id="GO:0033157">
    <property type="term" value="P:regulation of intracellular protein transport"/>
    <property type="evidence" value="ECO:0000314"/>
    <property type="project" value="UniProtKB"/>
</dbReference>
<dbReference type="GO" id="GO:0031647">
    <property type="term" value="P:regulation of protein stability"/>
    <property type="evidence" value="ECO:0000314"/>
    <property type="project" value="UniProtKB"/>
</dbReference>
<dbReference type="GO" id="GO:0035542">
    <property type="term" value="P:regulation of SNARE complex assembly"/>
    <property type="evidence" value="ECO:0000250"/>
    <property type="project" value="UniProtKB"/>
</dbReference>
<dbReference type="CDD" id="cd01850">
    <property type="entry name" value="CDC_Septin"/>
    <property type="match status" value="1"/>
</dbReference>
<dbReference type="FunFam" id="3.40.50.300:FF:000036">
    <property type="entry name" value="septin-6 isoform X2"/>
    <property type="match status" value="1"/>
</dbReference>
<dbReference type="Gene3D" id="3.40.50.300">
    <property type="entry name" value="P-loop containing nucleotide triphosphate hydrolases"/>
    <property type="match status" value="1"/>
</dbReference>
<dbReference type="InterPro" id="IPR030379">
    <property type="entry name" value="G_SEPTIN_dom"/>
</dbReference>
<dbReference type="InterPro" id="IPR027417">
    <property type="entry name" value="P-loop_NTPase"/>
</dbReference>
<dbReference type="InterPro" id="IPR016491">
    <property type="entry name" value="Septin"/>
</dbReference>
<dbReference type="PANTHER" id="PTHR18884">
    <property type="entry name" value="SEPTIN"/>
    <property type="match status" value="1"/>
</dbReference>
<dbReference type="Pfam" id="PF00735">
    <property type="entry name" value="Septin"/>
    <property type="match status" value="1"/>
</dbReference>
<dbReference type="PIRSF" id="PIRSF006698">
    <property type="entry name" value="Septin"/>
    <property type="match status" value="1"/>
</dbReference>
<dbReference type="SUPFAM" id="SSF52540">
    <property type="entry name" value="P-loop containing nucleoside triphosphate hydrolases"/>
    <property type="match status" value="1"/>
</dbReference>
<dbReference type="PROSITE" id="PS51719">
    <property type="entry name" value="G_SEPTIN"/>
    <property type="match status" value="1"/>
</dbReference>
<proteinExistence type="evidence at protein level"/>
<sequence>MAATDLERFSNAEPEPRSLSLGGHVGFDSLPDQLVSKSVTQGFSFNILCVGETGIGKSTLMNTLFNTTFETEEASHHEACVRLRPQTYDLQESNVQLKLTIVDAVGFGDQINKDESYRPIVDYIDAQFENYLQEELKIRRSLFDYHDTRIHVCLYFITPTGHSLKSLDLVTMKKLDSKVNIIPIIAKADTISKSELHKFKIKIMGELVSNGVQIYQFPTDDEAVAEINAVMNAHLPFAVVGSTEEVKVGNKLVRARQYPWGVVQVENENHCDFVKLREMLIRVNMEDLREQTHSRHYELYRRCKLEEMGFQDSDGDSQPFSLQETYEAKRKEFLSELQRKEEEMRQMFVNKVKETELELKEKERELHEKFEHLKRVHQEEKRKVEEKRRELEEETNAFNRRKAAVEALQSQALHATSQQPLRKDKDKKNRSDIGAHQPGMSLSSSKVMMTKASVEPLNCSSWWPAIQCCSCLVRDATWREGFL</sequence>
<gene>
    <name evidence="20" type="primary">SEPTIN8</name>
    <name evidence="14" type="synonym">KIAA0202</name>
    <name type="synonym">SEPT8</name>
</gene>
<organism>
    <name type="scientific">Homo sapiens</name>
    <name type="common">Human</name>
    <dbReference type="NCBI Taxonomy" id="9606"/>
    <lineage>
        <taxon>Eukaryota</taxon>
        <taxon>Metazoa</taxon>
        <taxon>Chordata</taxon>
        <taxon>Craniata</taxon>
        <taxon>Vertebrata</taxon>
        <taxon>Euteleostomi</taxon>
        <taxon>Mammalia</taxon>
        <taxon>Eutheria</taxon>
        <taxon>Euarchontoglires</taxon>
        <taxon>Primates</taxon>
        <taxon>Haplorrhini</taxon>
        <taxon>Catarrhini</taxon>
        <taxon>Hominidae</taxon>
        <taxon>Homo</taxon>
    </lineage>
</organism>
<accession>Q92599</accession>
<accession>A6NC65</accession>
<accession>A6NKP6</accession>
<accession>F6W7K9</accession>
<accession>Q8IX36</accession>
<accession>Q8IX37</accession>
<accession>Q9BVB3</accession>
<reference key="1">
    <citation type="journal article" date="2002" name="FEBS Lett.">
        <title>Human septin-septin interaction: CDCrel-1 partners with KIAA0202.</title>
        <authorList>
            <person name="Blaeser S."/>
            <person name="Jersch K."/>
            <person name="Hainmann I."/>
            <person name="Wunderle D."/>
            <person name="Zgaga-Griesz A."/>
            <person name="Busse A."/>
            <person name="Zieger B."/>
        </authorList>
    </citation>
    <scope>NUCLEOTIDE SEQUENCE [MRNA] (ISOFORM 1)</scope>
    <scope>INTERACTION WITH SEPTIN5</scope>
    <scope>TISSUE SPECIFICITY</scope>
</reference>
<reference key="2">
    <citation type="journal article" date="2003" name="Gene">
        <title>Isolation of new splice isoforms, characterization and expression analysis of the human septin SEPT8 (KIAA0202).</title>
        <authorList>
            <person name="Blaeser S."/>
            <person name="Jersch K."/>
            <person name="Hainmann I."/>
            <person name="Zieger W."/>
            <person name="Wunderle D."/>
            <person name="Busse A."/>
            <person name="Zieger B."/>
        </authorList>
    </citation>
    <scope>NUCLEOTIDE SEQUENCE [MRNA] (ISOFORMS 1; 2 AND 3)</scope>
    <scope>ALTERNATIVE SPLICING</scope>
    <scope>INTERACTION WITH SEPTIN5</scope>
    <scope>TISSUE SPECIFICITY</scope>
</reference>
<reference key="3">
    <citation type="journal article" date="1996" name="DNA Res.">
        <title>Prediction of the coding sequences of unidentified human genes. VI. The coding sequences of 80 new genes (KIAA0201-KIAA0280) deduced by analysis of cDNA clones from cell line KG-1 and brain.</title>
        <authorList>
            <person name="Nagase T."/>
            <person name="Seki N."/>
            <person name="Ishikawa K."/>
            <person name="Ohira M."/>
            <person name="Kawarabayasi Y."/>
            <person name="Ohara O."/>
            <person name="Tanaka A."/>
            <person name="Kotani H."/>
            <person name="Miyajima N."/>
            <person name="Nomura N."/>
        </authorList>
    </citation>
    <scope>NUCLEOTIDE SEQUENCE [LARGE SCALE MRNA] (ISOFORM 2)</scope>
    <source>
        <tissue>Bone marrow</tissue>
    </source>
</reference>
<reference key="4">
    <citation type="journal article" date="2000" name="Genomics">
        <title>Identification of 40 genes on a 1-Mb contig around the IL-4 cytokine family gene cluster on mouse chromosome 11.</title>
        <authorList>
            <person name="Wenderfer S.E."/>
            <person name="Slack J.P."/>
            <person name="McCluskey T.S."/>
            <person name="Monaco J.J."/>
        </authorList>
    </citation>
    <scope>NUCLEOTIDE SEQUENCE [MRNA] (ISOFORM 2)</scope>
</reference>
<reference key="5">
    <citation type="journal article" date="2004" name="Nat. Genet.">
        <title>Complete sequencing and characterization of 21,243 full-length human cDNAs.</title>
        <authorList>
            <person name="Ota T."/>
            <person name="Suzuki Y."/>
            <person name="Nishikawa T."/>
            <person name="Otsuki T."/>
            <person name="Sugiyama T."/>
            <person name="Irie R."/>
            <person name="Wakamatsu A."/>
            <person name="Hayashi K."/>
            <person name="Sato H."/>
            <person name="Nagai K."/>
            <person name="Kimura K."/>
            <person name="Makita H."/>
            <person name="Sekine M."/>
            <person name="Obayashi M."/>
            <person name="Nishi T."/>
            <person name="Shibahara T."/>
            <person name="Tanaka T."/>
            <person name="Ishii S."/>
            <person name="Yamamoto J."/>
            <person name="Saito K."/>
            <person name="Kawai Y."/>
            <person name="Isono Y."/>
            <person name="Nakamura Y."/>
            <person name="Nagahari K."/>
            <person name="Murakami K."/>
            <person name="Yasuda T."/>
            <person name="Iwayanagi T."/>
            <person name="Wagatsuma M."/>
            <person name="Shiratori A."/>
            <person name="Sudo H."/>
            <person name="Hosoiri T."/>
            <person name="Kaku Y."/>
            <person name="Kodaira H."/>
            <person name="Kondo H."/>
            <person name="Sugawara M."/>
            <person name="Takahashi M."/>
            <person name="Kanda K."/>
            <person name="Yokoi T."/>
            <person name="Furuya T."/>
            <person name="Kikkawa E."/>
            <person name="Omura Y."/>
            <person name="Abe K."/>
            <person name="Kamihara K."/>
            <person name="Katsuta N."/>
            <person name="Sato K."/>
            <person name="Tanikawa M."/>
            <person name="Yamazaki M."/>
            <person name="Ninomiya K."/>
            <person name="Ishibashi T."/>
            <person name="Yamashita H."/>
            <person name="Murakawa K."/>
            <person name="Fujimori K."/>
            <person name="Tanai H."/>
            <person name="Kimata M."/>
            <person name="Watanabe M."/>
            <person name="Hiraoka S."/>
            <person name="Chiba Y."/>
            <person name="Ishida S."/>
            <person name="Ono Y."/>
            <person name="Takiguchi S."/>
            <person name="Watanabe S."/>
            <person name="Yosida M."/>
            <person name="Hotuta T."/>
            <person name="Kusano J."/>
            <person name="Kanehori K."/>
            <person name="Takahashi-Fujii A."/>
            <person name="Hara H."/>
            <person name="Tanase T.-O."/>
            <person name="Nomura Y."/>
            <person name="Togiya S."/>
            <person name="Komai F."/>
            <person name="Hara R."/>
            <person name="Takeuchi K."/>
            <person name="Arita M."/>
            <person name="Imose N."/>
            <person name="Musashino K."/>
            <person name="Yuuki H."/>
            <person name="Oshima A."/>
            <person name="Sasaki N."/>
            <person name="Aotsuka S."/>
            <person name="Yoshikawa Y."/>
            <person name="Matsunawa H."/>
            <person name="Ichihara T."/>
            <person name="Shiohata N."/>
            <person name="Sano S."/>
            <person name="Moriya S."/>
            <person name="Momiyama H."/>
            <person name="Satoh N."/>
            <person name="Takami S."/>
            <person name="Terashima Y."/>
            <person name="Suzuki O."/>
            <person name="Nakagawa S."/>
            <person name="Senoh A."/>
            <person name="Mizoguchi H."/>
            <person name="Goto Y."/>
            <person name="Shimizu F."/>
            <person name="Wakebe H."/>
            <person name="Hishigaki H."/>
            <person name="Watanabe T."/>
            <person name="Sugiyama A."/>
            <person name="Takemoto M."/>
            <person name="Kawakami B."/>
            <person name="Yamazaki M."/>
            <person name="Watanabe K."/>
            <person name="Kumagai A."/>
            <person name="Itakura S."/>
            <person name="Fukuzumi Y."/>
            <person name="Fujimori Y."/>
            <person name="Komiyama M."/>
            <person name="Tashiro H."/>
            <person name="Tanigami A."/>
            <person name="Fujiwara T."/>
            <person name="Ono T."/>
            <person name="Yamada K."/>
            <person name="Fujii Y."/>
            <person name="Ozaki K."/>
            <person name="Hirao M."/>
            <person name="Ohmori Y."/>
            <person name="Kawabata A."/>
            <person name="Hikiji T."/>
            <person name="Kobatake N."/>
            <person name="Inagaki H."/>
            <person name="Ikema Y."/>
            <person name="Okamoto S."/>
            <person name="Okitani R."/>
            <person name="Kawakami T."/>
            <person name="Noguchi S."/>
            <person name="Itoh T."/>
            <person name="Shigeta K."/>
            <person name="Senba T."/>
            <person name="Matsumura K."/>
            <person name="Nakajima Y."/>
            <person name="Mizuno T."/>
            <person name="Morinaga M."/>
            <person name="Sasaki M."/>
            <person name="Togashi T."/>
            <person name="Oyama M."/>
            <person name="Hata H."/>
            <person name="Watanabe M."/>
            <person name="Komatsu T."/>
            <person name="Mizushima-Sugano J."/>
            <person name="Satoh T."/>
            <person name="Shirai Y."/>
            <person name="Takahashi Y."/>
            <person name="Nakagawa K."/>
            <person name="Okumura K."/>
            <person name="Nagase T."/>
            <person name="Nomura N."/>
            <person name="Kikuchi H."/>
            <person name="Masuho Y."/>
            <person name="Yamashita R."/>
            <person name="Nakai K."/>
            <person name="Yada T."/>
            <person name="Nakamura Y."/>
            <person name="Ohara O."/>
            <person name="Isogai T."/>
            <person name="Sugano S."/>
        </authorList>
    </citation>
    <scope>NUCLEOTIDE SEQUENCE [LARGE SCALE MRNA] (ISOFORM 4)</scope>
</reference>
<reference key="6">
    <citation type="journal article" date="2004" name="Nature">
        <title>The DNA sequence and comparative analysis of human chromosome 5.</title>
        <authorList>
            <person name="Schmutz J."/>
            <person name="Martin J."/>
            <person name="Terry A."/>
            <person name="Couronne O."/>
            <person name="Grimwood J."/>
            <person name="Lowry S."/>
            <person name="Gordon L.A."/>
            <person name="Scott D."/>
            <person name="Xie G."/>
            <person name="Huang W."/>
            <person name="Hellsten U."/>
            <person name="Tran-Gyamfi M."/>
            <person name="She X."/>
            <person name="Prabhakar S."/>
            <person name="Aerts A."/>
            <person name="Altherr M."/>
            <person name="Bajorek E."/>
            <person name="Black S."/>
            <person name="Branscomb E."/>
            <person name="Caoile C."/>
            <person name="Challacombe J.F."/>
            <person name="Chan Y.M."/>
            <person name="Denys M."/>
            <person name="Detter J.C."/>
            <person name="Escobar J."/>
            <person name="Flowers D."/>
            <person name="Fotopulos D."/>
            <person name="Glavina T."/>
            <person name="Gomez M."/>
            <person name="Gonzales E."/>
            <person name="Goodstein D."/>
            <person name="Grigoriev I."/>
            <person name="Groza M."/>
            <person name="Hammon N."/>
            <person name="Hawkins T."/>
            <person name="Haydu L."/>
            <person name="Israni S."/>
            <person name="Jett J."/>
            <person name="Kadner K."/>
            <person name="Kimball H."/>
            <person name="Kobayashi A."/>
            <person name="Lopez F."/>
            <person name="Lou Y."/>
            <person name="Martinez D."/>
            <person name="Medina C."/>
            <person name="Morgan J."/>
            <person name="Nandkeshwar R."/>
            <person name="Noonan J.P."/>
            <person name="Pitluck S."/>
            <person name="Pollard M."/>
            <person name="Predki P."/>
            <person name="Priest J."/>
            <person name="Ramirez L."/>
            <person name="Retterer J."/>
            <person name="Rodriguez A."/>
            <person name="Rogers S."/>
            <person name="Salamov A."/>
            <person name="Salazar A."/>
            <person name="Thayer N."/>
            <person name="Tice H."/>
            <person name="Tsai M."/>
            <person name="Ustaszewska A."/>
            <person name="Vo N."/>
            <person name="Wheeler J."/>
            <person name="Wu K."/>
            <person name="Yang J."/>
            <person name="Dickson M."/>
            <person name="Cheng J.-F."/>
            <person name="Eichler E.E."/>
            <person name="Olsen A."/>
            <person name="Pennacchio L.A."/>
            <person name="Rokhsar D.S."/>
            <person name="Richardson P."/>
            <person name="Lucas S.M."/>
            <person name="Myers R.M."/>
            <person name="Rubin E.M."/>
        </authorList>
    </citation>
    <scope>NUCLEOTIDE SEQUENCE [LARGE SCALE GENOMIC DNA]</scope>
</reference>
<reference key="7">
    <citation type="submission" date="2005-09" db="EMBL/GenBank/DDBJ databases">
        <authorList>
            <person name="Mural R.J."/>
            <person name="Istrail S."/>
            <person name="Sutton G.G."/>
            <person name="Florea L."/>
            <person name="Halpern A.L."/>
            <person name="Mobarry C.M."/>
            <person name="Lippert R."/>
            <person name="Walenz B."/>
            <person name="Shatkay H."/>
            <person name="Dew I."/>
            <person name="Miller J.R."/>
            <person name="Flanigan M.J."/>
            <person name="Edwards N.J."/>
            <person name="Bolanos R."/>
            <person name="Fasulo D."/>
            <person name="Halldorsson B.V."/>
            <person name="Hannenhalli S."/>
            <person name="Turner R."/>
            <person name="Yooseph S."/>
            <person name="Lu F."/>
            <person name="Nusskern D.R."/>
            <person name="Shue B.C."/>
            <person name="Zheng X.H."/>
            <person name="Zhong F."/>
            <person name="Delcher A.L."/>
            <person name="Huson D.H."/>
            <person name="Kravitz S.A."/>
            <person name="Mouchard L."/>
            <person name="Reinert K."/>
            <person name="Remington K.A."/>
            <person name="Clark A.G."/>
            <person name="Waterman M.S."/>
            <person name="Eichler E.E."/>
            <person name="Adams M.D."/>
            <person name="Hunkapiller M.W."/>
            <person name="Myers E.W."/>
            <person name="Venter J.C."/>
        </authorList>
    </citation>
    <scope>NUCLEOTIDE SEQUENCE [LARGE SCALE GENOMIC DNA]</scope>
</reference>
<reference key="8">
    <citation type="journal article" date="2004" name="Genome Res.">
        <title>The status, quality, and expansion of the NIH full-length cDNA project: the Mammalian Gene Collection (MGC).</title>
        <authorList>
            <consortium name="The MGC Project Team"/>
        </authorList>
    </citation>
    <scope>NUCLEOTIDE SEQUENCE [LARGE SCALE MRNA] OF 122-483 (ISOFORMS 2/3)</scope>
    <source>
        <tissue>Cervix</tissue>
    </source>
</reference>
<reference key="9">
    <citation type="journal article" date="2002" name="Mol. Biol. Cell">
        <title>Mammalian septins nomenclature.</title>
        <authorList>
            <person name="Macara I.G."/>
            <person name="Baldarelli R."/>
            <person name="Field C.M."/>
            <person name="Glotzer M."/>
            <person name="Hayashi Y."/>
            <person name="Hsu S.-C."/>
            <person name="Kennedy M.B."/>
            <person name="Kinoshita M."/>
            <person name="Longtine M."/>
            <person name="Low C."/>
            <person name="Maltais L.J."/>
            <person name="McKenzie L."/>
            <person name="Mitchison T.J."/>
            <person name="Nishikawa T."/>
            <person name="Noda M."/>
            <person name="Petty E.M."/>
            <person name="Peifer M."/>
            <person name="Pringle J.R."/>
            <person name="Robinson P.J."/>
            <person name="Roth D."/>
            <person name="Russell S.E.H."/>
            <person name="Stuhlmann H."/>
            <person name="Tanaka M."/>
            <person name="Tanaka T."/>
            <person name="Trimble W.S."/>
            <person name="Ware J."/>
            <person name="Zeleznik-Le N.J."/>
            <person name="Zieger B."/>
        </authorList>
    </citation>
    <scope>IDENTIFICATION OF INITIATOR METHIONINE</scope>
</reference>
<reference key="10">
    <citation type="journal article" date="2002" name="Sheng Wu Hua Xue Yu Sheng Wu Wu Li Xue Bao">
        <title>KIAA0202, a human septin family member, interacting with hPFTAIRE1.</title>
        <authorList>
            <person name="Yang T."/>
            <person name="Gao Y.K."/>
            <person name="Chen J.Y."/>
        </authorList>
    </citation>
    <scope>INTERACTION WITH CDK14</scope>
</reference>
<reference key="11">
    <citation type="journal article" date="2004" name="Thromb. Haemost.">
        <title>The novel human platelet septin SEPT8 is an interaction partner of SEPT4.</title>
        <authorList>
            <person name="Blaeser S."/>
            <person name="Horn J."/>
            <person name="Wuermell P."/>
            <person name="Bauer H."/>
            <person name="Struempell S."/>
            <person name="Nurden P."/>
            <person name="Pagenstecher A."/>
            <person name="Busse A."/>
            <person name="Wunderle D."/>
            <person name="Hainmann I."/>
            <person name="Zieger B."/>
        </authorList>
    </citation>
    <scope>FUNCTION</scope>
    <scope>INTERACTION WITH SEPTIN4</scope>
    <scope>SUBCELLULAR LOCATION</scope>
    <scope>TISSUE SPECIFICITY</scope>
</reference>
<reference key="12">
    <citation type="journal article" date="2005" name="J. Pathol.">
        <title>Expression profiling the human septin gene family.</title>
        <authorList>
            <person name="Hall P.A."/>
            <person name="Jung K."/>
            <person name="Hillan K.J."/>
            <person name="Russell S.E.H."/>
        </authorList>
    </citation>
    <scope>TISSUE SPECIFICITY</scope>
</reference>
<reference key="13">
    <citation type="journal article" date="2011" name="BMC Syst. Biol.">
        <title>Initial characterization of the human central proteome.</title>
        <authorList>
            <person name="Burkard T.R."/>
            <person name="Planyavsky M."/>
            <person name="Kaupe I."/>
            <person name="Breitwieser F.P."/>
            <person name="Buerckstuemmer T."/>
            <person name="Bennett K.L."/>
            <person name="Superti-Furga G."/>
            <person name="Colinge J."/>
        </authorList>
    </citation>
    <scope>IDENTIFICATION BY MASS SPECTROMETRY [LARGE SCALE ANALYSIS]</scope>
</reference>
<reference key="14">
    <citation type="journal article" date="2012" name="Proc. Natl. Acad. Sci. U.S.A.">
        <title>N-terminal acetylome analyses and functional insights of the N-terminal acetyltransferase NatB.</title>
        <authorList>
            <person name="Van Damme P."/>
            <person name="Lasa M."/>
            <person name="Polevoda B."/>
            <person name="Gazquez C."/>
            <person name="Elosegui-Artola A."/>
            <person name="Kim D.S."/>
            <person name="De Juan-Pardo E."/>
            <person name="Demeyer K."/>
            <person name="Hole K."/>
            <person name="Larrea E."/>
            <person name="Timmerman E."/>
            <person name="Prieto J."/>
            <person name="Arnesen T."/>
            <person name="Sherman F."/>
            <person name="Gevaert K."/>
            <person name="Aldabe R."/>
        </authorList>
    </citation>
    <scope>ACETYLATION [LARGE SCALE ANALYSIS] AT ALA-2</scope>
    <scope>CLEAVAGE OF INITIATOR METHIONINE [LARGE SCALE ANALYSIS]</scope>
    <scope>IDENTIFICATION BY MASS SPECTROMETRY [LARGE SCALE ANALYSIS]</scope>
</reference>
<reference key="15">
    <citation type="journal article" date="2013" name="J. Proteome Res.">
        <title>Toward a comprehensive characterization of a human cancer cell phosphoproteome.</title>
        <authorList>
            <person name="Zhou H."/>
            <person name="Di Palma S."/>
            <person name="Preisinger C."/>
            <person name="Peng M."/>
            <person name="Polat A.N."/>
            <person name="Heck A.J."/>
            <person name="Mohammed S."/>
        </authorList>
    </citation>
    <scope>PHOSPHORYLATION [LARGE SCALE ANALYSIS] AT SER-10</scope>
    <scope>IDENTIFICATION BY MASS SPECTROMETRY [LARGE SCALE ANALYSIS]</scope>
    <source>
        <tissue>Cervix carcinoma</tissue>
        <tissue>Erythroleukemia</tissue>
    </source>
</reference>
<reference key="16">
    <citation type="journal article" date="2014" name="J. Proteomics">
        <title>An enzyme assisted RP-RPLC approach for in-depth analysis of human liver phosphoproteome.</title>
        <authorList>
            <person name="Bian Y."/>
            <person name="Song C."/>
            <person name="Cheng K."/>
            <person name="Dong M."/>
            <person name="Wang F."/>
            <person name="Huang J."/>
            <person name="Sun D."/>
            <person name="Wang L."/>
            <person name="Ye M."/>
            <person name="Zou H."/>
        </authorList>
    </citation>
    <scope>IDENTIFICATION BY MASS SPECTROMETRY [LARGE SCALE ANALYSIS]</scope>
    <source>
        <tissue>Liver</tissue>
    </source>
</reference>
<reference key="17">
    <citation type="journal article" date="2016" name="J. Cell Sci.">
        <title>SEPT8 modulates beta-amyloidogenic processing of APP by affecting the sorting and accumulation of BACE1.</title>
        <authorList>
            <person name="Kurkinen K.M."/>
            <person name="Marttinen M."/>
            <person name="Turner L."/>
            <person name="Natunen T."/>
            <person name="Maekinen P."/>
            <person name="Haapalinna F."/>
            <person name="Sarajaervi T."/>
            <person name="Gabbouj S."/>
            <person name="Kurki M."/>
            <person name="Paananen J."/>
            <person name="Koivisto A.M."/>
            <person name="Rauramaa T."/>
            <person name="Leinonen V."/>
            <person name="Tanila H."/>
            <person name="Soininen H."/>
            <person name="Lucas F.R."/>
            <person name="Haapasalo A."/>
            <person name="Hiltunen M."/>
        </authorList>
    </citation>
    <scope>FUNCTION (ISOFORM 4)</scope>
    <scope>ALTERNATIVE SPLICING</scope>
    <scope>TISSUE SPECIFICITY</scope>
</reference>